<evidence type="ECO:0000250" key="1"/>
<evidence type="ECO:0000250" key="2">
    <source>
        <dbReference type="UniProtKB" id="Q9R172"/>
    </source>
</evidence>
<evidence type="ECO:0000250" key="3">
    <source>
        <dbReference type="UniProtKB" id="Q9UM47"/>
    </source>
</evidence>
<evidence type="ECO:0000255" key="4"/>
<evidence type="ECO:0000255" key="5">
    <source>
        <dbReference type="PROSITE-ProRule" id="PRU00076"/>
    </source>
</evidence>
<evidence type="ECO:0000256" key="6">
    <source>
        <dbReference type="SAM" id="MobiDB-lite"/>
    </source>
</evidence>
<evidence type="ECO:0000269" key="7">
    <source>
    </source>
</evidence>
<evidence type="ECO:0000269" key="8">
    <source>
    </source>
</evidence>
<evidence type="ECO:0000269" key="9">
    <source>
    </source>
</evidence>
<evidence type="ECO:0000269" key="10">
    <source>
    </source>
</evidence>
<evidence type="ECO:0000269" key="11">
    <source>
    </source>
</evidence>
<evidence type="ECO:0000305" key="12"/>
<sequence length="2318" mass="244248">MGLGARGRRRRRRLMALPPPPPPMRALPLLLLLAGLGAAAPPCLDGSPCANGGRCTHQQPSLEAACLCLPGWVGERCQLEDPCHSGPCAGRGVCQSSVVAGTARFSCRCLRGFQGPDCSQPDPCVSRPCVHGAPCSVGPDGRFACACPPGYQGQSCQSDIDECRSGTTCRHGGTCLNTPGSFRCQCPLGYTGLLCENPVVPCAPSPCRNGGTCRQSSDVTYDCACLPGFEGQNCEVNVDDCPGHRCLNGGTCVDGVNTYNCQCPPEWTGQFCTEDVDECQLQPNACHNGGTCFNLLGGHSCVCVNGWTGESCSQNIDDCATAVCFHGATCHDRVASFYCACPMGKTGLLCHLDDACVSNPCHEDAICDTNPVSGRAICTCPPGFTGGACDQDVDECSIGANPCEHLGRCVNTQGSFLCQCGRGYTGPRCETDVNECLSGPCRNQATCLDRIGQFTCICMAGFTGTYCEVDIDECQSSPCVNGGVCKDRVNGFSCTCPSGFSGSMCQLDVDECASTPCRNGAKCVDQPDGYECRCAEGFEGTLCERNVDDCSPDPCHHGRCVDGIASFSCACAPGYTGIRCESQVDECRSQPCRYGGKCLDLVDKYLCRCPPGTTGVNCEVNIDDCASNPCTFGVCRDGINRYDCVCQPGFTGPLCNVEINECASSPCGEGGSCVDGENGFHCLCPPGSLPPLCLPANHPCAHKPCSHGVCHDAPGGFRCVCEPGWSGPRCSQSLAPDACESQPCQAGGTCTSDGIGFRCTCAPGFQGHQCEVLSPCTPSLCEHGGHCESDPDRLTVCSCPPGWQGPRCQQDVDECAGASPCGPHGTCTNLPGNFRCICHRGYTGPFCDQDIDDCDPNPCLHGGSCQDGVGSFSCSCLDGFAGPRCARDVDECLSSPCGPGTCTDHVASFTCACPPGYGGFHCEIDLPDCSPSSCFNGGTCVDGVSSFSCLCRPGYTGTHCQYEADPCFSRPCLHGGICNPTHPGFECTCREGFTGSQCQNPVDWCSQAPCQNGGRCVQTGAYCICPPGWSGRLCDIQSLPCTEAAAQMGVRLEQLCQEGGKCIDKGRSHYCVCPEGRTGSHCEHEVDPCTAQPCQHGGTCRGYMGGYVCECPAGYAGDSCEDNIDECASQPCQNGGSCIDLVARYLCSCPPGTLGVLCEINEDDCDLGPSLDSGVQCLHNGTCVDLVGGFRCNCPPGYTGLHCEADINECRPGACHAAHTRDCLQDPGGHFRCVCHPGFTGPRCQIALSPCESQPCQHGGQCRHSLGRGGGLTFTCHCVPPFWGLRCERVARSCRELQCPVGIPCQQTARGPRCACPPGLSGPSCRVSRASPSGATNASCASAPCLHGGSCLPVQSVPFFRCVCAPGWGGPRCETPSAAPEVPEEPRCPRAACQAKRGDQNCDRECNTPGCGWDGGDCSLNVDDPWRQCEALQCWRLFNNSRCDPACSSPACLYDNFDCYSGGRDRTCNPVYEKYCADHFADGRCDQGCNTEECGWDGLDCASEVPALLARGVLVLTVLLPPEELLRSSADFLQRLSAILRTSLRFRLDARGQAMVFPYHRPSPGSESRVRRELGPEVIGSVVMLEIDNRLCLQSAENDHCFPDAQSAADYLGALSAVERLDFPYPLRDVRGEPLEAPEQSVPLLPLLVAGAVFLLIIFILGVMVARRKREHSTLWFPEGFALHKDIAAGHKGRREPVGQDALGMKNMAKGESLMGEVVTDLNDSECPEAKRLKVEEPGMGAEEPEDCRQWTQHHLVAADIRVAPATALTPPQGDADADGVDVNVRGPDGFTPLMLASFCGGALEPMPAEEDEADDTSASIISDLICQGAQLGARTDRTGETALHLAARYARADAAKRLLDAGADTNAQDHSGRTPLHTAVTADAQGVFQILIRNRSTDLDARMADGSTALILAARLAVEGMVEELIASHADVNAVDELGKSALHWAAAVNNVEATLALLKNGANKDMQDSKEETPLFLAAREGSYEAAKLLLDHLANREITDHLDRLPRDVAQERLHQDIVRLLDQPSGPRSPSGPHGLGPLLCPPGAFLPGLKAVQSGTKKSRRPPGKTGLGPQGTRGRGKKLTLACPGPLADSSVTLSPVDSLDSPRPFSGPPASPGGFPLEGPYATTATAVSLAQLGASRAGPLGRQPPGGCVLSFGLLNPVAVPLDWARLPPPAPPGPSFLLPLAPGPQLLNPGAPVSPQERPPPYLAAPGHGEEYPAAGTRSSPTKARFLRVPSEHPYLTPSPESPEHWASPSPPSLSDWSDSTPSPATATNATASGALPAQPHPISVPSLPQSQTQLGPQPEVTPKRQVMA</sequence>
<accession>Q61982</accession>
<comment type="function">
    <text evidence="2 3">Functions as a receptor for membrane-bound ligands Jagged1, Jagged2 and Delta1 to regulate cell-fate determination. Upon ligand activation through the released notch intracellular domain (NICD) it forms a transcriptional activator complex with RBPJ/RBPSUH and activates genes of the enhancer of split locus. Affects the implementation of differentiation, proliferation and apoptotic programs (By similarity). May play a role during CNS development.</text>
</comment>
<comment type="subunit">
    <text evidence="1 9 10">Interacts with PSMA1 (By similarity). Heterodimer of a C-terminal fragment N(TM) and a N-terminal fragment N(EC) which are probably linked by disulfide bonds. Interacts with MAML1, MAML2 and MAML3 which act as transcriptional coactivators for NOTCH3. Interacts with HIF1AN.</text>
</comment>
<comment type="interaction">
    <interactant intactId="EBI-11292908">
        <id>PRO_0000007697</id>
    </interactant>
    <interactant intactId="EBI-11292862">
        <id>Q77CA8</id>
        <label>LRORF2</label>
    </interactant>
    <organismsDiffer>true</organismsDiffer>
    <experiments>3</experiments>
</comment>
<comment type="subcellular location">
    <subcellularLocation>
        <location evidence="3">Cell membrane</location>
        <topology>Single-pass type I membrane protein</topology>
    </subcellularLocation>
</comment>
<comment type="subcellular location">
    <molecule>Notch 3 intracellular domain</molecule>
    <subcellularLocation>
        <location>Nucleus</location>
    </subcellularLocation>
    <text>Following proteolytical processing NICD is translocated to the nucleus.</text>
</comment>
<comment type="tissue specificity">
    <text>Proliferating neuroepithelium.</text>
</comment>
<comment type="developmental stage">
    <text>CNS development.</text>
</comment>
<comment type="domain">
    <text evidence="3">The EGF-like domains 10 and 11 are required for binding the ligands JAG1 and DLL1.</text>
</comment>
<comment type="PTM">
    <text evidence="7 8">Synthesized in the endoplasmic reticulum as an inactive form which is proteolytically cleaved by a furin-like convertase in the trans-Golgi network before it reaches the plasma membrane to yield an active, ligand-accessible form. Cleavage results in a C-terminal fragment N(TM) and a N-terminal fragment N(EC). Following ligand binding, it is cleaved by TNF-alpha converting enzyme (TACE) to yield a membrane-associated intermediate fragment called notch extracellular truncation (NEXT). This fragment is then cleaved by presenilin dependent gamma-secretase to release a notch-derived peptide containing the intracellular domain (NICD) from the membrane.</text>
</comment>
<comment type="PTM">
    <text>Phosphorylated.</text>
</comment>
<comment type="PTM">
    <text evidence="11">Hydroxylated by HIF1AN.</text>
</comment>
<comment type="similarity">
    <text evidence="12">Belongs to the NOTCH family.</text>
</comment>
<proteinExistence type="evidence at protein level"/>
<protein>
    <recommendedName>
        <fullName>Neurogenic locus notch homolog protein 3</fullName>
        <shortName>Notch 3</shortName>
    </recommendedName>
    <component>
        <recommendedName>
            <fullName>Notch 3 extracellular truncation</fullName>
        </recommendedName>
    </component>
    <component>
        <recommendedName>
            <fullName>Notch 3 intracellular domain</fullName>
        </recommendedName>
    </component>
</protein>
<feature type="signal peptide" evidence="4">
    <location>
        <begin position="1"/>
        <end position="39"/>
    </location>
</feature>
<feature type="chain" id="PRO_0000007695" description="Neurogenic locus notch homolog protein 3">
    <location>
        <begin position="40"/>
        <end position="2318"/>
    </location>
</feature>
<feature type="chain" id="PRO_0000007696" description="Notch 3 extracellular truncation">
    <location>
        <begin position="1630"/>
        <end position="2318"/>
    </location>
</feature>
<feature type="chain" id="PRO_0000007697" description="Notch 3 intracellular domain">
    <location>
        <begin position="1663"/>
        <end position="2318"/>
    </location>
</feature>
<feature type="topological domain" description="Extracellular">
    <location>
        <begin position="40"/>
        <end position="1643"/>
    </location>
</feature>
<feature type="transmembrane region" description="Helical" evidence="4">
    <location>
        <begin position="1644"/>
        <end position="1664"/>
    </location>
</feature>
<feature type="topological domain" description="Cytoplasmic">
    <location>
        <begin position="1665"/>
        <end position="2318"/>
    </location>
</feature>
<feature type="domain" description="EGF-like 1" evidence="5">
    <location>
        <begin position="40"/>
        <end position="78"/>
    </location>
</feature>
<feature type="domain" description="EGF-like 2" evidence="5">
    <location>
        <begin position="79"/>
        <end position="119"/>
    </location>
</feature>
<feature type="domain" description="EGF-like 3" evidence="5">
    <location>
        <begin position="120"/>
        <end position="157"/>
    </location>
</feature>
<feature type="domain" description="EGF-like 4; calcium-binding" evidence="5">
    <location>
        <begin position="159"/>
        <end position="196"/>
    </location>
</feature>
<feature type="domain" description="EGF-like 5" evidence="5">
    <location>
        <begin position="198"/>
        <end position="235"/>
    </location>
</feature>
<feature type="domain" description="EGF-like 6; calcium-binding" evidence="5">
    <location>
        <begin position="237"/>
        <end position="273"/>
    </location>
</feature>
<feature type="domain" description="EGF-like 7" evidence="5">
    <location>
        <begin position="275"/>
        <end position="313"/>
    </location>
</feature>
<feature type="domain" description="EGF-like 8; calcium-binding" evidence="5">
    <location>
        <begin position="315"/>
        <end position="351"/>
    </location>
</feature>
<feature type="domain" description="EGF-like 9" evidence="5">
    <location>
        <begin position="352"/>
        <end position="390"/>
    </location>
</feature>
<feature type="domain" description="EGF-like 10; calcium-binding" evidence="5">
    <location>
        <begin position="392"/>
        <end position="430"/>
    </location>
</feature>
<feature type="domain" description="EGF-like 11; calcium-binding" evidence="5">
    <location>
        <begin position="432"/>
        <end position="468"/>
    </location>
</feature>
<feature type="domain" description="EGF-like 12; calcium-binding" evidence="5">
    <location>
        <begin position="470"/>
        <end position="506"/>
    </location>
</feature>
<feature type="domain" description="EGF-like 13; calcium-binding" evidence="5">
    <location>
        <begin position="508"/>
        <end position="544"/>
    </location>
</feature>
<feature type="domain" description="EGF-like 14; calcium-binding" evidence="5">
    <location>
        <begin position="546"/>
        <end position="581"/>
    </location>
</feature>
<feature type="domain" description="EGF-like 15; calcium-binding" evidence="5">
    <location>
        <begin position="583"/>
        <end position="619"/>
    </location>
</feature>
<feature type="domain" description="EGF-like 16; calcium-binding" evidence="5">
    <location>
        <begin position="621"/>
        <end position="656"/>
    </location>
</feature>
<feature type="domain" description="EGF-like 17; calcium-binding" evidence="5">
    <location>
        <begin position="658"/>
        <end position="694"/>
    </location>
</feature>
<feature type="domain" description="EGF-like 18" evidence="5">
    <location>
        <begin position="696"/>
        <end position="731"/>
    </location>
</feature>
<feature type="domain" description="EGF-like 19" evidence="5">
    <location>
        <begin position="735"/>
        <end position="771"/>
    </location>
</feature>
<feature type="domain" description="EGF-like 20" evidence="5">
    <location>
        <begin position="772"/>
        <end position="809"/>
    </location>
</feature>
<feature type="domain" description="EGF-like 21; calcium-binding" evidence="5">
    <location>
        <begin position="811"/>
        <end position="848"/>
    </location>
</feature>
<feature type="domain" description="EGF-like 22; calcium-binding" evidence="5">
    <location>
        <begin position="850"/>
        <end position="886"/>
    </location>
</feature>
<feature type="domain" description="EGF-like 23; calcium-binding" evidence="5">
    <location>
        <begin position="888"/>
        <end position="923"/>
    </location>
</feature>
<feature type="domain" description="EGF-like 24" evidence="5">
    <location>
        <begin position="925"/>
        <end position="961"/>
    </location>
</feature>
<feature type="domain" description="EGF-like 25" evidence="5">
    <location>
        <begin position="963"/>
        <end position="999"/>
    </location>
</feature>
<feature type="domain" description="EGF-like 26" evidence="5">
    <location>
        <begin position="1001"/>
        <end position="1035"/>
    </location>
</feature>
<feature type="domain" description="EGF-like 27" evidence="12">
    <location>
        <begin position="1037"/>
        <end position="1083"/>
    </location>
</feature>
<feature type="domain" description="EGF-like 28" evidence="5">
    <location>
        <begin position="1085"/>
        <end position="1121"/>
    </location>
</feature>
<feature type="domain" description="EGF-like 29; calcium-binding" evidence="5">
    <location>
        <begin position="1123"/>
        <end position="1159"/>
    </location>
</feature>
<feature type="domain" description="EGF-like 30; calcium-binding" evidence="5">
    <location>
        <begin position="1161"/>
        <end position="1204"/>
    </location>
</feature>
<feature type="domain" description="EGF-like 31" evidence="5">
    <location>
        <begin position="1206"/>
        <end position="1245"/>
    </location>
</feature>
<feature type="domain" description="EGF-like 32" evidence="5">
    <location>
        <begin position="1247"/>
        <end position="1288"/>
    </location>
</feature>
<feature type="domain" description="EGF-like 33" evidence="5">
    <location>
        <begin position="1290"/>
        <end position="1326"/>
    </location>
</feature>
<feature type="domain" description="EGF-like 34" evidence="5">
    <location>
        <begin position="1336"/>
        <end position="1374"/>
    </location>
</feature>
<feature type="repeat" description="LNR 1">
    <location>
        <begin position="1388"/>
        <end position="1428"/>
    </location>
</feature>
<feature type="repeat" description="LNR 2">
    <location>
        <begin position="1429"/>
        <end position="1466"/>
    </location>
</feature>
<feature type="repeat" description="LNR 3">
    <location>
        <begin position="1468"/>
        <end position="1506"/>
    </location>
</feature>
<feature type="repeat" description="ANK 1">
    <location>
        <begin position="1839"/>
        <end position="1868"/>
    </location>
</feature>
<feature type="repeat" description="ANK 2">
    <location>
        <begin position="1872"/>
        <end position="1902"/>
    </location>
</feature>
<feature type="repeat" description="ANK 3">
    <location>
        <begin position="1906"/>
        <end position="1935"/>
    </location>
</feature>
<feature type="repeat" description="ANK 4">
    <location>
        <begin position="1939"/>
        <end position="1968"/>
    </location>
</feature>
<feature type="repeat" description="ANK 5">
    <location>
        <begin position="1972"/>
        <end position="2001"/>
    </location>
</feature>
<feature type="region of interest" description="Disordered" evidence="6">
    <location>
        <begin position="1"/>
        <end position="20"/>
    </location>
</feature>
<feature type="region of interest" description="Disordered" evidence="6">
    <location>
        <begin position="2025"/>
        <end position="2045"/>
    </location>
</feature>
<feature type="region of interest" description="Disordered" evidence="6">
    <location>
        <begin position="2058"/>
        <end position="2126"/>
    </location>
</feature>
<feature type="region of interest" description="Disordered" evidence="6">
    <location>
        <begin position="2184"/>
        <end position="2318"/>
    </location>
</feature>
<feature type="region of interest" description="PEST-like">
    <location>
        <begin position="2242"/>
        <end position="2261"/>
    </location>
</feature>
<feature type="compositionally biased region" description="Basic residues" evidence="6">
    <location>
        <begin position="1"/>
        <end position="14"/>
    </location>
</feature>
<feature type="compositionally biased region" description="Low complexity" evidence="6">
    <location>
        <begin position="2028"/>
        <end position="2045"/>
    </location>
</feature>
<feature type="compositionally biased region" description="Low complexity" evidence="6">
    <location>
        <begin position="2184"/>
        <end position="2193"/>
    </location>
</feature>
<feature type="compositionally biased region" description="Low complexity" evidence="6">
    <location>
        <begin position="2262"/>
        <end position="2282"/>
    </location>
</feature>
<feature type="compositionally biased region" description="Polar residues" evidence="6">
    <location>
        <begin position="2296"/>
        <end position="2305"/>
    </location>
</feature>
<feature type="site" description="Cleavage; by furin-like protease" evidence="1">
    <location>
        <begin position="1572"/>
        <end position="1573"/>
    </location>
</feature>
<feature type="modified residue" description="Omega-N-methylarginine" evidence="3">
    <location>
        <position position="2174"/>
    </location>
</feature>
<feature type="glycosylation site" description="N-linked (GlcNAc...) asparagine" evidence="4">
    <location>
        <position position="1180"/>
    </location>
</feature>
<feature type="glycosylation site" description="N-linked (GlcNAc...) asparagine" evidence="4">
    <location>
        <position position="1337"/>
    </location>
</feature>
<feature type="glycosylation site" description="N-linked (GlcNAc...) asparagine" evidence="4">
    <location>
        <position position="1439"/>
    </location>
</feature>
<feature type="disulfide bond" evidence="1">
    <location>
        <begin position="43"/>
        <end position="55"/>
    </location>
</feature>
<feature type="disulfide bond" evidence="1">
    <location>
        <begin position="49"/>
        <end position="66"/>
    </location>
</feature>
<feature type="disulfide bond" evidence="1">
    <location>
        <begin position="68"/>
        <end position="77"/>
    </location>
</feature>
<feature type="disulfide bond" evidence="1">
    <location>
        <begin position="83"/>
        <end position="94"/>
    </location>
</feature>
<feature type="disulfide bond" evidence="1">
    <location>
        <begin position="88"/>
        <end position="107"/>
    </location>
</feature>
<feature type="disulfide bond" evidence="1">
    <location>
        <begin position="109"/>
        <end position="118"/>
    </location>
</feature>
<feature type="disulfide bond" evidence="1">
    <location>
        <begin position="124"/>
        <end position="135"/>
    </location>
</feature>
<feature type="disulfide bond" evidence="1">
    <location>
        <begin position="129"/>
        <end position="145"/>
    </location>
</feature>
<feature type="disulfide bond" evidence="1">
    <location>
        <begin position="147"/>
        <end position="156"/>
    </location>
</feature>
<feature type="disulfide bond" evidence="1">
    <location>
        <begin position="163"/>
        <end position="175"/>
    </location>
</feature>
<feature type="disulfide bond" evidence="1">
    <location>
        <begin position="169"/>
        <end position="184"/>
    </location>
</feature>
<feature type="disulfide bond" evidence="1">
    <location>
        <begin position="186"/>
        <end position="195"/>
    </location>
</feature>
<feature type="disulfide bond" evidence="1">
    <location>
        <begin position="202"/>
        <end position="213"/>
    </location>
</feature>
<feature type="disulfide bond" evidence="1">
    <location>
        <begin position="207"/>
        <end position="223"/>
    </location>
</feature>
<feature type="disulfide bond" evidence="1">
    <location>
        <begin position="225"/>
        <end position="234"/>
    </location>
</feature>
<feature type="disulfide bond" evidence="1">
    <location>
        <begin position="241"/>
        <end position="252"/>
    </location>
</feature>
<feature type="disulfide bond" evidence="1">
    <location>
        <begin position="246"/>
        <end position="261"/>
    </location>
</feature>
<feature type="disulfide bond" evidence="1">
    <location>
        <begin position="263"/>
        <end position="272"/>
    </location>
</feature>
<feature type="disulfide bond" evidence="1">
    <location>
        <begin position="279"/>
        <end position="292"/>
    </location>
</feature>
<feature type="disulfide bond" evidence="1">
    <location>
        <begin position="286"/>
        <end position="301"/>
    </location>
</feature>
<feature type="disulfide bond" evidence="1">
    <location>
        <begin position="303"/>
        <end position="312"/>
    </location>
</feature>
<feature type="disulfide bond" evidence="1">
    <location>
        <begin position="319"/>
        <end position="330"/>
    </location>
</feature>
<feature type="disulfide bond" evidence="1">
    <location>
        <begin position="324"/>
        <end position="339"/>
    </location>
</feature>
<feature type="disulfide bond" evidence="1">
    <location>
        <begin position="341"/>
        <end position="350"/>
    </location>
</feature>
<feature type="disulfide bond" evidence="1">
    <location>
        <begin position="356"/>
        <end position="367"/>
    </location>
</feature>
<feature type="disulfide bond" evidence="1">
    <location>
        <begin position="361"/>
        <end position="378"/>
    </location>
</feature>
<feature type="disulfide bond" evidence="1">
    <location>
        <begin position="380"/>
        <end position="389"/>
    </location>
</feature>
<feature type="disulfide bond" evidence="1">
    <location>
        <begin position="396"/>
        <end position="409"/>
    </location>
</feature>
<feature type="disulfide bond" evidence="1">
    <location>
        <begin position="403"/>
        <end position="418"/>
    </location>
</feature>
<feature type="disulfide bond" evidence="1">
    <location>
        <begin position="420"/>
        <end position="429"/>
    </location>
</feature>
<feature type="disulfide bond" evidence="1">
    <location>
        <begin position="436"/>
        <end position="447"/>
    </location>
</feature>
<feature type="disulfide bond" evidence="1">
    <location>
        <begin position="441"/>
        <end position="456"/>
    </location>
</feature>
<feature type="disulfide bond" evidence="1">
    <location>
        <begin position="458"/>
        <end position="467"/>
    </location>
</feature>
<feature type="disulfide bond" evidence="1">
    <location>
        <begin position="474"/>
        <end position="485"/>
    </location>
</feature>
<feature type="disulfide bond" evidence="1">
    <location>
        <begin position="479"/>
        <end position="494"/>
    </location>
</feature>
<feature type="disulfide bond" evidence="1">
    <location>
        <begin position="496"/>
        <end position="505"/>
    </location>
</feature>
<feature type="disulfide bond" evidence="1">
    <location>
        <begin position="512"/>
        <end position="523"/>
    </location>
</feature>
<feature type="disulfide bond" evidence="1">
    <location>
        <begin position="517"/>
        <end position="532"/>
    </location>
</feature>
<feature type="disulfide bond" evidence="1">
    <location>
        <begin position="534"/>
        <end position="543"/>
    </location>
</feature>
<feature type="disulfide bond" evidence="1">
    <location>
        <begin position="550"/>
        <end position="560"/>
    </location>
</feature>
<feature type="disulfide bond" evidence="1">
    <location>
        <begin position="555"/>
        <end position="569"/>
    </location>
</feature>
<feature type="disulfide bond" evidence="1">
    <location>
        <begin position="571"/>
        <end position="580"/>
    </location>
</feature>
<feature type="disulfide bond" evidence="1">
    <location>
        <begin position="587"/>
        <end position="598"/>
    </location>
</feature>
<feature type="disulfide bond" evidence="1">
    <location>
        <begin position="592"/>
        <end position="607"/>
    </location>
</feature>
<feature type="disulfide bond" evidence="1">
    <location>
        <begin position="609"/>
        <end position="618"/>
    </location>
</feature>
<feature type="disulfide bond" evidence="1">
    <location>
        <begin position="625"/>
        <end position="635"/>
    </location>
</feature>
<feature type="disulfide bond" evidence="1">
    <location>
        <begin position="630"/>
        <end position="644"/>
    </location>
</feature>
<feature type="disulfide bond" evidence="1">
    <location>
        <begin position="646"/>
        <end position="655"/>
    </location>
</feature>
<feature type="disulfide bond" evidence="1">
    <location>
        <begin position="662"/>
        <end position="673"/>
    </location>
</feature>
<feature type="disulfide bond" evidence="1">
    <location>
        <begin position="667"/>
        <end position="682"/>
    </location>
</feature>
<feature type="disulfide bond" evidence="1">
    <location>
        <begin position="684"/>
        <end position="693"/>
    </location>
</feature>
<feature type="disulfide bond" evidence="1">
    <location>
        <begin position="700"/>
        <end position="710"/>
    </location>
</feature>
<feature type="disulfide bond" evidence="1">
    <location>
        <begin position="705"/>
        <end position="719"/>
    </location>
</feature>
<feature type="disulfide bond" evidence="1">
    <location>
        <begin position="721"/>
        <end position="730"/>
    </location>
</feature>
<feature type="disulfide bond" evidence="1">
    <location>
        <begin position="739"/>
        <end position="750"/>
    </location>
</feature>
<feature type="disulfide bond" evidence="1">
    <location>
        <begin position="744"/>
        <end position="759"/>
    </location>
</feature>
<feature type="disulfide bond" evidence="1">
    <location>
        <begin position="761"/>
        <end position="770"/>
    </location>
</feature>
<feature type="disulfide bond" evidence="1">
    <location>
        <begin position="776"/>
        <end position="787"/>
    </location>
</feature>
<feature type="disulfide bond" evidence="1">
    <location>
        <begin position="781"/>
        <end position="797"/>
    </location>
</feature>
<feature type="disulfide bond" evidence="1">
    <location>
        <begin position="799"/>
        <end position="808"/>
    </location>
</feature>
<feature type="disulfide bond" evidence="1">
    <location>
        <begin position="815"/>
        <end position="827"/>
    </location>
</feature>
<feature type="disulfide bond" evidence="1">
    <location>
        <begin position="821"/>
        <end position="836"/>
    </location>
</feature>
<feature type="disulfide bond" evidence="1">
    <location>
        <begin position="838"/>
        <end position="847"/>
    </location>
</feature>
<feature type="disulfide bond" evidence="1">
    <location>
        <begin position="854"/>
        <end position="865"/>
    </location>
</feature>
<feature type="disulfide bond" evidence="1">
    <location>
        <begin position="859"/>
        <end position="874"/>
    </location>
</feature>
<feature type="disulfide bond" evidence="1">
    <location>
        <begin position="876"/>
        <end position="885"/>
    </location>
</feature>
<feature type="disulfide bond" evidence="1">
    <location>
        <begin position="892"/>
        <end position="902"/>
    </location>
</feature>
<feature type="disulfide bond" evidence="1">
    <location>
        <begin position="897"/>
        <end position="911"/>
    </location>
</feature>
<feature type="disulfide bond" evidence="1">
    <location>
        <begin position="913"/>
        <end position="922"/>
    </location>
</feature>
<feature type="disulfide bond" evidence="1">
    <location>
        <begin position="929"/>
        <end position="940"/>
    </location>
</feature>
<feature type="disulfide bond" evidence="1">
    <location>
        <begin position="934"/>
        <end position="949"/>
    </location>
</feature>
<feature type="disulfide bond" evidence="1">
    <location>
        <begin position="951"/>
        <end position="960"/>
    </location>
</feature>
<feature type="disulfide bond" evidence="1">
    <location>
        <begin position="967"/>
        <end position="978"/>
    </location>
</feature>
<feature type="disulfide bond" evidence="1">
    <location>
        <begin position="972"/>
        <end position="987"/>
    </location>
</feature>
<feature type="disulfide bond" evidence="1">
    <location>
        <begin position="989"/>
        <end position="998"/>
    </location>
</feature>
<feature type="disulfide bond" evidence="1">
    <location>
        <begin position="1005"/>
        <end position="1016"/>
    </location>
</feature>
<feature type="disulfide bond" evidence="1">
    <location>
        <begin position="1010"/>
        <end position="1023"/>
    </location>
</feature>
<feature type="disulfide bond" evidence="1">
    <location>
        <begin position="1025"/>
        <end position="1034"/>
    </location>
</feature>
<feature type="disulfide bond" evidence="12">
    <location>
        <begin position="1041"/>
        <end position="1062"/>
    </location>
</feature>
<feature type="disulfide bond" evidence="1">
    <location>
        <begin position="1056"/>
        <end position="1071"/>
    </location>
</feature>
<feature type="disulfide bond" evidence="1">
    <location>
        <begin position="1073"/>
        <end position="1082"/>
    </location>
</feature>
<feature type="disulfide bond" evidence="1">
    <location>
        <begin position="1089"/>
        <end position="1100"/>
    </location>
</feature>
<feature type="disulfide bond" evidence="1">
    <location>
        <begin position="1094"/>
        <end position="1109"/>
    </location>
</feature>
<feature type="disulfide bond" evidence="1">
    <location>
        <begin position="1111"/>
        <end position="1120"/>
    </location>
</feature>
<feature type="disulfide bond" evidence="1">
    <location>
        <begin position="1127"/>
        <end position="1138"/>
    </location>
</feature>
<feature type="disulfide bond" evidence="1">
    <location>
        <begin position="1132"/>
        <end position="1147"/>
    </location>
</feature>
<feature type="disulfide bond" evidence="1">
    <location>
        <begin position="1149"/>
        <end position="1158"/>
    </location>
</feature>
<feature type="disulfide bond" evidence="1">
    <location>
        <begin position="1165"/>
        <end position="1183"/>
    </location>
</feature>
<feature type="disulfide bond" evidence="1">
    <location>
        <begin position="1177"/>
        <end position="1192"/>
    </location>
</feature>
<feature type="disulfide bond" evidence="1">
    <location>
        <begin position="1194"/>
        <end position="1203"/>
    </location>
</feature>
<feature type="disulfide bond" evidence="1">
    <location>
        <begin position="1210"/>
        <end position="1223"/>
    </location>
</feature>
<feature type="disulfide bond" evidence="1">
    <location>
        <begin position="1215"/>
        <end position="1233"/>
    </location>
</feature>
<feature type="disulfide bond" evidence="1">
    <location>
        <begin position="1235"/>
        <end position="1244"/>
    </location>
</feature>
<feature type="disulfide bond" evidence="1">
    <location>
        <begin position="1251"/>
        <end position="1262"/>
    </location>
</feature>
<feature type="disulfide bond" evidence="1">
    <location>
        <begin position="1256"/>
        <end position="1276"/>
    </location>
</feature>
<feature type="disulfide bond" evidence="1">
    <location>
        <begin position="1278"/>
        <end position="1287"/>
    </location>
</feature>
<feature type="disulfide bond" evidence="1">
    <location>
        <begin position="1294"/>
        <end position="1305"/>
    </location>
</feature>
<feature type="disulfide bond" evidence="1">
    <location>
        <begin position="1299"/>
        <end position="1314"/>
    </location>
</feature>
<feature type="disulfide bond" evidence="1">
    <location>
        <begin position="1316"/>
        <end position="1325"/>
    </location>
</feature>
<feature type="disulfide bond" evidence="1">
    <location>
        <begin position="1340"/>
        <end position="1351"/>
    </location>
</feature>
<feature type="disulfide bond" evidence="1">
    <location>
        <begin position="1345"/>
        <end position="1362"/>
    </location>
</feature>
<feature type="disulfide bond" evidence="1">
    <location>
        <begin position="1364"/>
        <end position="1373"/>
    </location>
</feature>
<feature type="disulfide bond" evidence="1">
    <location>
        <begin position="1388"/>
        <end position="1411"/>
    </location>
</feature>
<feature type="disulfide bond" evidence="1">
    <location>
        <begin position="1393"/>
        <end position="1406"/>
    </location>
</feature>
<feature type="disulfide bond" evidence="1">
    <location>
        <begin position="1402"/>
        <end position="1418"/>
    </location>
</feature>
<feature type="disulfide bond" evidence="1">
    <location>
        <begin position="1429"/>
        <end position="1452"/>
    </location>
</feature>
<feature type="disulfide bond" evidence="1">
    <location>
        <begin position="1434"/>
        <end position="1447"/>
    </location>
</feature>
<feature type="disulfide bond" evidence="1">
    <location>
        <begin position="1443"/>
        <end position="1459"/>
    </location>
</feature>
<feature type="disulfide bond" evidence="1">
    <location>
        <begin position="1468"/>
        <end position="1494"/>
    </location>
</feature>
<feature type="disulfide bond" evidence="1">
    <location>
        <begin position="1476"/>
        <end position="1489"/>
    </location>
</feature>
<feature type="disulfide bond" evidence="1">
    <location>
        <begin position="1485"/>
        <end position="1501"/>
    </location>
</feature>
<feature type="mutagenesis site" description="No effect on NICD processing." evidence="8">
    <original>M</original>
    <variation>L</variation>
    <location>
        <position position="1664"/>
    </location>
</feature>
<gene>
    <name type="primary">Notch3</name>
</gene>
<dbReference type="EMBL" id="X74760">
    <property type="protein sequence ID" value="CAA52776.1"/>
    <property type="molecule type" value="mRNA"/>
</dbReference>
<dbReference type="CCDS" id="CCDS28614.1"/>
<dbReference type="PIR" id="S45306">
    <property type="entry name" value="S45306"/>
</dbReference>
<dbReference type="RefSeq" id="NP_032742.1">
    <property type="nucleotide sequence ID" value="NM_008716.3"/>
</dbReference>
<dbReference type="SMR" id="Q61982"/>
<dbReference type="BioGRID" id="201811">
    <property type="interactions" value="11"/>
</dbReference>
<dbReference type="CORUM" id="Q61982"/>
<dbReference type="FunCoup" id="Q61982">
    <property type="interactions" value="509"/>
</dbReference>
<dbReference type="IntAct" id="Q61982">
    <property type="interactions" value="3"/>
</dbReference>
<dbReference type="MINT" id="Q61982"/>
<dbReference type="STRING" id="10090.ENSMUSP00000085016"/>
<dbReference type="GlyCosmos" id="Q61982">
    <property type="glycosylation" value="3 sites, No reported glycans"/>
</dbReference>
<dbReference type="GlyGen" id="Q61982">
    <property type="glycosylation" value="5 sites, 1 N-linked glycan (1 site), 1 O-linked glycan (1 site)"/>
</dbReference>
<dbReference type="iPTMnet" id="Q61982"/>
<dbReference type="PhosphoSitePlus" id="Q61982"/>
<dbReference type="CPTAC" id="non-CPTAC-3485"/>
<dbReference type="PaxDb" id="10090-ENSMUSP00000085016"/>
<dbReference type="PeptideAtlas" id="Q61982"/>
<dbReference type="ProteomicsDB" id="293705"/>
<dbReference type="ABCD" id="Q61982">
    <property type="antibodies" value="2 sequenced antibodies"/>
</dbReference>
<dbReference type="Antibodypedia" id="3951">
    <property type="antibodies" value="741 antibodies from 46 providers"/>
</dbReference>
<dbReference type="DNASU" id="18131"/>
<dbReference type="Ensembl" id="ENSMUST00000087723.5">
    <property type="protein sequence ID" value="ENSMUSP00000085016.4"/>
    <property type="gene ID" value="ENSMUSG00000038146.9"/>
</dbReference>
<dbReference type="GeneID" id="18131"/>
<dbReference type="KEGG" id="mmu:18131"/>
<dbReference type="UCSC" id="uc008bvx.1">
    <property type="organism name" value="mouse"/>
</dbReference>
<dbReference type="AGR" id="MGI:99460"/>
<dbReference type="CTD" id="4854"/>
<dbReference type="MGI" id="MGI:99460">
    <property type="gene designation" value="Notch3"/>
</dbReference>
<dbReference type="VEuPathDB" id="HostDB:ENSMUSG00000038146"/>
<dbReference type="eggNOG" id="KOG1217">
    <property type="taxonomic scope" value="Eukaryota"/>
</dbReference>
<dbReference type="GeneTree" id="ENSGT00940000160234"/>
<dbReference type="HOGENOM" id="CLU_000576_0_0_1"/>
<dbReference type="InParanoid" id="Q61982"/>
<dbReference type="OMA" id="QNINDCD"/>
<dbReference type="OrthoDB" id="283575at2759"/>
<dbReference type="PhylomeDB" id="Q61982"/>
<dbReference type="TreeFam" id="TF351641"/>
<dbReference type="Reactome" id="R-MMU-1912420">
    <property type="pathway name" value="Pre-NOTCH Processing in Golgi"/>
</dbReference>
<dbReference type="Reactome" id="R-MMU-350054">
    <property type="pathway name" value="Notch-HLH transcription pathway"/>
</dbReference>
<dbReference type="Reactome" id="R-MMU-9013507">
    <property type="pathway name" value="NOTCH3 Activation and Transmission of Signal to the Nucleus"/>
</dbReference>
<dbReference type="Reactome" id="R-MMU-9017802">
    <property type="pathway name" value="Noncanonical activation of NOTCH3"/>
</dbReference>
<dbReference type="BioGRID-ORCS" id="18131">
    <property type="hits" value="1 hit in 79 CRISPR screens"/>
</dbReference>
<dbReference type="ChiTaRS" id="Notch3">
    <property type="organism name" value="mouse"/>
</dbReference>
<dbReference type="PRO" id="PR:Q61982"/>
<dbReference type="Proteomes" id="UP000000589">
    <property type="component" value="Chromosome 17"/>
</dbReference>
<dbReference type="RNAct" id="Q61982">
    <property type="molecule type" value="protein"/>
</dbReference>
<dbReference type="Bgee" id="ENSMUSG00000038146">
    <property type="expression patterns" value="Expressed in external carotid artery and 283 other cell types or tissues"/>
</dbReference>
<dbReference type="ExpressionAtlas" id="Q61982">
    <property type="expression patterns" value="baseline and differential"/>
</dbReference>
<dbReference type="GO" id="GO:0005829">
    <property type="term" value="C:cytosol"/>
    <property type="evidence" value="ECO:0000304"/>
    <property type="project" value="Reactome"/>
</dbReference>
<dbReference type="GO" id="GO:0005654">
    <property type="term" value="C:nucleoplasm"/>
    <property type="evidence" value="ECO:0000304"/>
    <property type="project" value="Reactome"/>
</dbReference>
<dbReference type="GO" id="GO:0005886">
    <property type="term" value="C:plasma membrane"/>
    <property type="evidence" value="ECO:0000314"/>
    <property type="project" value="MGI"/>
</dbReference>
<dbReference type="GO" id="GO:0043235">
    <property type="term" value="C:receptor complex"/>
    <property type="evidence" value="ECO:0000266"/>
    <property type="project" value="MGI"/>
</dbReference>
<dbReference type="GO" id="GO:0005509">
    <property type="term" value="F:calcium ion binding"/>
    <property type="evidence" value="ECO:0007669"/>
    <property type="project" value="InterPro"/>
</dbReference>
<dbReference type="GO" id="GO:0019899">
    <property type="term" value="F:enzyme binding"/>
    <property type="evidence" value="ECO:0000353"/>
    <property type="project" value="UniProtKB"/>
</dbReference>
<dbReference type="GO" id="GO:0042802">
    <property type="term" value="F:identical protein binding"/>
    <property type="evidence" value="ECO:0007669"/>
    <property type="project" value="Ensembl"/>
</dbReference>
<dbReference type="GO" id="GO:0038023">
    <property type="term" value="F:signaling receptor activity"/>
    <property type="evidence" value="ECO:0000250"/>
    <property type="project" value="UniProtKB"/>
</dbReference>
<dbReference type="GO" id="GO:0048844">
    <property type="term" value="P:artery morphogenesis"/>
    <property type="evidence" value="ECO:0000315"/>
    <property type="project" value="MGI"/>
</dbReference>
<dbReference type="GO" id="GO:0030900">
    <property type="term" value="P:forebrain development"/>
    <property type="evidence" value="ECO:0000316"/>
    <property type="project" value="MGI"/>
</dbReference>
<dbReference type="GO" id="GO:0072104">
    <property type="term" value="P:glomerular capillary formation"/>
    <property type="evidence" value="ECO:0000270"/>
    <property type="project" value="UniProtKB"/>
</dbReference>
<dbReference type="GO" id="GO:0045596">
    <property type="term" value="P:negative regulation of cell differentiation"/>
    <property type="evidence" value="ECO:0000315"/>
    <property type="project" value="MGI"/>
</dbReference>
<dbReference type="GO" id="GO:0045665">
    <property type="term" value="P:negative regulation of neuron differentiation"/>
    <property type="evidence" value="ECO:0000315"/>
    <property type="project" value="MGI"/>
</dbReference>
<dbReference type="GO" id="GO:0000122">
    <property type="term" value="P:negative regulation of transcription by RNA polymerase II"/>
    <property type="evidence" value="ECO:0000315"/>
    <property type="project" value="MGI"/>
</dbReference>
<dbReference type="GO" id="GO:0014016">
    <property type="term" value="P:neuroblast differentiation"/>
    <property type="evidence" value="ECO:0000315"/>
    <property type="project" value="MGI"/>
</dbReference>
<dbReference type="GO" id="GO:0030182">
    <property type="term" value="P:neuron differentiation"/>
    <property type="evidence" value="ECO:0000315"/>
    <property type="project" value="MGI"/>
</dbReference>
<dbReference type="GO" id="GO:0048663">
    <property type="term" value="P:neuron fate commitment"/>
    <property type="evidence" value="ECO:0000316"/>
    <property type="project" value="MGI"/>
</dbReference>
<dbReference type="GO" id="GO:0007219">
    <property type="term" value="P:Notch signaling pathway"/>
    <property type="evidence" value="ECO:0000314"/>
    <property type="project" value="UniProtKB"/>
</dbReference>
<dbReference type="GO" id="GO:1902895">
    <property type="term" value="P:positive regulation of miRNA transcription"/>
    <property type="evidence" value="ECO:0007669"/>
    <property type="project" value="Ensembl"/>
</dbReference>
<dbReference type="GO" id="GO:0048661">
    <property type="term" value="P:positive regulation of smooth muscle cell proliferation"/>
    <property type="evidence" value="ECO:0000314"/>
    <property type="project" value="UniProtKB"/>
</dbReference>
<dbReference type="GO" id="GO:0045944">
    <property type="term" value="P:positive regulation of transcription by RNA polymerase II"/>
    <property type="evidence" value="ECO:0000315"/>
    <property type="project" value="MGI"/>
</dbReference>
<dbReference type="CDD" id="cd00054">
    <property type="entry name" value="EGF_CA"/>
    <property type="match status" value="23"/>
</dbReference>
<dbReference type="CDD" id="cd21704">
    <property type="entry name" value="JMTM_Notch3"/>
    <property type="match status" value="1"/>
</dbReference>
<dbReference type="FunFam" id="2.10.25.10:FF:000038">
    <property type="entry name" value="Fibrillin 2"/>
    <property type="match status" value="1"/>
</dbReference>
<dbReference type="FunFam" id="1.25.40.20:FF:000005">
    <property type="entry name" value="Neurogenic locus notch 1"/>
    <property type="match status" value="1"/>
</dbReference>
<dbReference type="FunFam" id="2.10.25.10:FF:000004">
    <property type="entry name" value="Neurogenic locus notch 1"/>
    <property type="match status" value="3"/>
</dbReference>
<dbReference type="FunFam" id="2.10.25.10:FF:000080">
    <property type="entry name" value="Neurogenic locus notch 1"/>
    <property type="match status" value="1"/>
</dbReference>
<dbReference type="FunFam" id="2.10.25.10:FF:000136">
    <property type="entry name" value="Neurogenic locus notch 1"/>
    <property type="match status" value="1"/>
</dbReference>
<dbReference type="FunFam" id="3.30.300.320:FF:000001">
    <property type="entry name" value="Neurogenic locus notch 1"/>
    <property type="match status" value="1"/>
</dbReference>
<dbReference type="FunFam" id="2.10.25.10:FF:000534">
    <property type="entry name" value="Neurogenic locus notch homolog protein 3"/>
    <property type="match status" value="1"/>
</dbReference>
<dbReference type="FunFam" id="2.10.25.10:FF:000687">
    <property type="entry name" value="Neurogenic locus notch homolog protein 3"/>
    <property type="match status" value="1"/>
</dbReference>
<dbReference type="FunFam" id="3.30.70.3310:FF:000002">
    <property type="entry name" value="Neurogenic locus notch homolog protein 3"/>
    <property type="match status" value="1"/>
</dbReference>
<dbReference type="FunFam" id="2.10.25.10:FF:000031">
    <property type="entry name" value="neurogenic locus notch homolog protein 3"/>
    <property type="match status" value="2"/>
</dbReference>
<dbReference type="FunFam" id="2.10.25.10:FF:000100">
    <property type="entry name" value="neurogenic locus notch homolog protein 3"/>
    <property type="match status" value="2"/>
</dbReference>
<dbReference type="FunFam" id="2.10.25.10:FF:000272">
    <property type="entry name" value="neurogenic locus notch homolog protein 3"/>
    <property type="match status" value="1"/>
</dbReference>
<dbReference type="FunFam" id="2.10.25.10:FF:000446">
    <property type="entry name" value="neurogenic locus notch homolog protein 3"/>
    <property type="match status" value="1"/>
</dbReference>
<dbReference type="FunFam" id="2.10.25.10:FF:000455">
    <property type="entry name" value="neurogenic locus notch homolog protein 3"/>
    <property type="match status" value="1"/>
</dbReference>
<dbReference type="FunFam" id="2.10.25.10:FF:000060">
    <property type="entry name" value="Neurogenic locus notch protein 1"/>
    <property type="match status" value="1"/>
</dbReference>
<dbReference type="FunFam" id="2.10.25.10:FF:000092">
    <property type="entry name" value="Neurogenic locus notch protein 1"/>
    <property type="match status" value="1"/>
</dbReference>
<dbReference type="FunFam" id="2.10.25.10:FF:000127">
    <property type="entry name" value="Neurogenic locus notch protein 1"/>
    <property type="match status" value="1"/>
</dbReference>
<dbReference type="FunFam" id="2.10.25.10:FF:000125">
    <property type="entry name" value="Neurogenic locus notch protein-like"/>
    <property type="match status" value="1"/>
</dbReference>
<dbReference type="FunFam" id="2.10.25.10:FF:000109">
    <property type="entry name" value="Notch homolog 4, [Drosophila]"/>
    <property type="match status" value="1"/>
</dbReference>
<dbReference type="FunFam" id="2.10.25.10:FF:000299">
    <property type="entry name" value="Notch receptor 3"/>
    <property type="match status" value="2"/>
</dbReference>
<dbReference type="FunFam" id="2.10.25.10:FF:000522">
    <property type="entry name" value="Notch receptor 3"/>
    <property type="match status" value="1"/>
</dbReference>
<dbReference type="FunFam" id="2.10.25.10:FF:000718">
    <property type="entry name" value="Notch receptor 3"/>
    <property type="match status" value="1"/>
</dbReference>
<dbReference type="FunFam" id="2.10.25.10:FF:000143">
    <property type="entry name" value="Protein crumbs 1"/>
    <property type="match status" value="1"/>
</dbReference>
<dbReference type="FunFam" id="2.10.25.10:FF:000471">
    <property type="entry name" value="Protein lin-12"/>
    <property type="match status" value="1"/>
</dbReference>
<dbReference type="FunFam" id="2.10.25.10:FF:000146">
    <property type="entry name" value="Putative neurogenic locus notch"/>
    <property type="match status" value="1"/>
</dbReference>
<dbReference type="FunFam" id="2.10.25.10:FF:000309">
    <property type="entry name" value="Uncharacterized protein, isoform A"/>
    <property type="match status" value="1"/>
</dbReference>
<dbReference type="FunFam" id="2.10.25.10:FF:000472">
    <property type="entry name" value="Uncharacterized protein, isoform A"/>
    <property type="match status" value="1"/>
</dbReference>
<dbReference type="Gene3D" id="3.30.300.320">
    <property type="match status" value="1"/>
</dbReference>
<dbReference type="Gene3D" id="3.30.70.3310">
    <property type="match status" value="1"/>
</dbReference>
<dbReference type="Gene3D" id="1.25.40.20">
    <property type="entry name" value="Ankyrin repeat-containing domain"/>
    <property type="match status" value="1"/>
</dbReference>
<dbReference type="Gene3D" id="2.10.25.10">
    <property type="entry name" value="Laminin"/>
    <property type="match status" value="33"/>
</dbReference>
<dbReference type="InterPro" id="IPR002110">
    <property type="entry name" value="Ankyrin_rpt"/>
</dbReference>
<dbReference type="InterPro" id="IPR036770">
    <property type="entry name" value="Ankyrin_rpt-contain_sf"/>
</dbReference>
<dbReference type="InterPro" id="IPR001881">
    <property type="entry name" value="EGF-like_Ca-bd_dom"/>
</dbReference>
<dbReference type="InterPro" id="IPR013032">
    <property type="entry name" value="EGF-like_CS"/>
</dbReference>
<dbReference type="InterPro" id="IPR000742">
    <property type="entry name" value="EGF-like_dom"/>
</dbReference>
<dbReference type="InterPro" id="IPR000152">
    <property type="entry name" value="EGF-type_Asp/Asn_hydroxyl_site"/>
</dbReference>
<dbReference type="InterPro" id="IPR018097">
    <property type="entry name" value="EGF_Ca-bd_CS"/>
</dbReference>
<dbReference type="InterPro" id="IPR009030">
    <property type="entry name" value="Growth_fac_rcpt_cys_sf"/>
</dbReference>
<dbReference type="InterPro" id="IPR008297">
    <property type="entry name" value="Notch"/>
</dbReference>
<dbReference type="InterPro" id="IPR035993">
    <property type="entry name" value="Notch-like_dom_sf"/>
</dbReference>
<dbReference type="InterPro" id="IPR051355">
    <property type="entry name" value="Notch/Slit_guidance"/>
</dbReference>
<dbReference type="InterPro" id="IPR049883">
    <property type="entry name" value="NOTCH1_EGF-like"/>
</dbReference>
<dbReference type="InterPro" id="IPR022331">
    <property type="entry name" value="Notch_3"/>
</dbReference>
<dbReference type="InterPro" id="IPR024600">
    <property type="entry name" value="Notch_C"/>
</dbReference>
<dbReference type="InterPro" id="IPR000800">
    <property type="entry name" value="Notch_dom"/>
</dbReference>
<dbReference type="InterPro" id="IPR010660">
    <property type="entry name" value="Notch_NOD_dom"/>
</dbReference>
<dbReference type="InterPro" id="IPR011656">
    <property type="entry name" value="Notch_NODP_dom"/>
</dbReference>
<dbReference type="PANTHER" id="PTHR45836:SF17">
    <property type="entry name" value="NEUROGENIC LOCUS NOTCH HOMOLOG PROTEIN 3"/>
    <property type="match status" value="1"/>
</dbReference>
<dbReference type="PANTHER" id="PTHR45836">
    <property type="entry name" value="SLIT HOMOLOG"/>
    <property type="match status" value="1"/>
</dbReference>
<dbReference type="Pfam" id="PF12796">
    <property type="entry name" value="Ank_2"/>
    <property type="match status" value="2"/>
</dbReference>
<dbReference type="Pfam" id="PF00008">
    <property type="entry name" value="EGF"/>
    <property type="match status" value="14"/>
</dbReference>
<dbReference type="Pfam" id="PF07645">
    <property type="entry name" value="EGF_CA"/>
    <property type="match status" value="3"/>
</dbReference>
<dbReference type="Pfam" id="PF25024">
    <property type="entry name" value="EGF_TEN"/>
    <property type="match status" value="1"/>
</dbReference>
<dbReference type="Pfam" id="PF12661">
    <property type="entry name" value="hEGF"/>
    <property type="match status" value="4"/>
</dbReference>
<dbReference type="Pfam" id="PF06816">
    <property type="entry name" value="NOD"/>
    <property type="match status" value="1"/>
</dbReference>
<dbReference type="Pfam" id="PF07684">
    <property type="entry name" value="NODP"/>
    <property type="match status" value="1"/>
</dbReference>
<dbReference type="Pfam" id="PF00066">
    <property type="entry name" value="Notch"/>
    <property type="match status" value="3"/>
</dbReference>
<dbReference type="PIRSF" id="PIRSF002279">
    <property type="entry name" value="Notch"/>
    <property type="match status" value="1"/>
</dbReference>
<dbReference type="PRINTS" id="PR00010">
    <property type="entry name" value="EGFBLOOD"/>
</dbReference>
<dbReference type="PRINTS" id="PR01452">
    <property type="entry name" value="LNOTCHREPEAT"/>
</dbReference>
<dbReference type="PRINTS" id="PR01983">
    <property type="entry name" value="NOTCH"/>
</dbReference>
<dbReference type="PRINTS" id="PR01986">
    <property type="entry name" value="NOTCH3"/>
</dbReference>
<dbReference type="SMART" id="SM00248">
    <property type="entry name" value="ANK"/>
    <property type="match status" value="6"/>
</dbReference>
<dbReference type="SMART" id="SM01334">
    <property type="entry name" value="DUF3454"/>
    <property type="match status" value="1"/>
</dbReference>
<dbReference type="SMART" id="SM00181">
    <property type="entry name" value="EGF"/>
    <property type="match status" value="34"/>
</dbReference>
<dbReference type="SMART" id="SM00179">
    <property type="entry name" value="EGF_CA"/>
    <property type="match status" value="30"/>
</dbReference>
<dbReference type="SMART" id="SM00004">
    <property type="entry name" value="NL"/>
    <property type="match status" value="3"/>
</dbReference>
<dbReference type="SMART" id="SM01338">
    <property type="entry name" value="NOD"/>
    <property type="match status" value="1"/>
</dbReference>
<dbReference type="SMART" id="SM01339">
    <property type="entry name" value="NODP"/>
    <property type="match status" value="1"/>
</dbReference>
<dbReference type="SUPFAM" id="SSF48403">
    <property type="entry name" value="Ankyrin repeat"/>
    <property type="match status" value="1"/>
</dbReference>
<dbReference type="SUPFAM" id="SSF57196">
    <property type="entry name" value="EGF/Laminin"/>
    <property type="match status" value="17"/>
</dbReference>
<dbReference type="SUPFAM" id="SSF57184">
    <property type="entry name" value="Growth factor receptor domain"/>
    <property type="match status" value="5"/>
</dbReference>
<dbReference type="SUPFAM" id="SSF90193">
    <property type="entry name" value="Notch domain"/>
    <property type="match status" value="3"/>
</dbReference>
<dbReference type="PROSITE" id="PS50297">
    <property type="entry name" value="ANK_REP_REGION"/>
    <property type="match status" value="1"/>
</dbReference>
<dbReference type="PROSITE" id="PS50088">
    <property type="entry name" value="ANK_REPEAT"/>
    <property type="match status" value="4"/>
</dbReference>
<dbReference type="PROSITE" id="PS00010">
    <property type="entry name" value="ASX_HYDROXYL"/>
    <property type="match status" value="18"/>
</dbReference>
<dbReference type="PROSITE" id="PS00022">
    <property type="entry name" value="EGF_1"/>
    <property type="match status" value="33"/>
</dbReference>
<dbReference type="PROSITE" id="PS01186">
    <property type="entry name" value="EGF_2"/>
    <property type="match status" value="27"/>
</dbReference>
<dbReference type="PROSITE" id="PS50026">
    <property type="entry name" value="EGF_3"/>
    <property type="match status" value="34"/>
</dbReference>
<dbReference type="PROSITE" id="PS01187">
    <property type="entry name" value="EGF_CA"/>
    <property type="match status" value="16"/>
</dbReference>
<dbReference type="PROSITE" id="PS50258">
    <property type="entry name" value="LNR"/>
    <property type="match status" value="3"/>
</dbReference>
<reference key="1">
    <citation type="journal article" date="1994" name="Mech. Dev.">
        <title>The novel Notch homologue mouse Notch 3 lacks specific epidermal growth factor-repeats and is expressed in proliferating neuroepithelium.</title>
        <authorList>
            <person name="Lardelli M."/>
            <person name="Dalstrand J."/>
            <person name="Lendahl U."/>
        </authorList>
    </citation>
    <scope>NUCLEOTIDE SEQUENCE [MRNA]</scope>
    <source>
        <strain>ICR X Swiss Webster</strain>
    </source>
</reference>
<reference key="2">
    <citation type="journal article" date="2001" name="J. Biol. Chem.">
        <title>Murine notch homologs (N1-4) undergo presenilin-dependent proteolysis.</title>
        <authorList>
            <person name="Saxena M.T."/>
            <person name="Schroeter E.H."/>
            <person name="Mumm J.S."/>
            <person name="Kopan R."/>
        </authorList>
    </citation>
    <scope>PROTEOLYTIC PROCESSING</scope>
    <scope>MUTAGENESIS OF MET-1664</scope>
</reference>
<reference key="3">
    <citation type="journal article" date="2001" name="Proc. Natl. Acad. Sci. U.S.A.">
        <title>Conservation of the biochemical mechanisms of signal transduction among mammalian Notch family members.</title>
        <authorList>
            <person name="Mizutani T."/>
            <person name="Taniguchi Y."/>
            <person name="Aoki T."/>
            <person name="Hashimoto N."/>
            <person name="Honjo T."/>
        </authorList>
    </citation>
    <scope>PROTEOLYTIC PROCESSING</scope>
</reference>
<reference key="4">
    <citation type="journal article" date="2004" name="Gene">
        <title>Cloning and functional characterization of the murine mastermind-like 1 (Maml1) gene.</title>
        <authorList>
            <person name="Wu L."/>
            <person name="Kobayashi K."/>
            <person name="Sun T."/>
            <person name="Gao P."/>
            <person name="Liu J."/>
            <person name="Nakamura M."/>
            <person name="Weisberg E."/>
            <person name="Mukhopadhyay N.K."/>
            <person name="Griffin J.D."/>
        </authorList>
    </citation>
    <scope>INTERACTION WITH MAML1</scope>
</reference>
<reference key="5">
    <citation type="journal article" date="2007" name="J. Biol. Chem.">
        <title>Asparaginyl hydroxylation of the Notch ankyrin repeat domain by factor inhibiting hypoxia-inducible factor.</title>
        <authorList>
            <person name="Coleman M.L."/>
            <person name="McDonough M.A."/>
            <person name="Hewitson K.S."/>
            <person name="Coles C."/>
            <person name="Mecinovic J."/>
            <person name="Edelmann M."/>
            <person name="Cook K.M."/>
            <person name="Cockman M.E."/>
            <person name="Lancaster D.E."/>
            <person name="Kessler B.M."/>
            <person name="Oldham N.J."/>
            <person name="Ratcliffe P.J."/>
            <person name="Schofield C.J."/>
        </authorList>
    </citation>
    <scope>INTERACTION WITH HIF1AN</scope>
</reference>
<reference key="6">
    <citation type="journal article" date="2008" name="Proc. Natl. Acad. Sci. U.S.A.">
        <title>Interaction with factor inhibiting HIF-1 defines an additional mode of cross-coupling between the Notch and hypoxia signaling pathways.</title>
        <authorList>
            <person name="Zheng X."/>
            <person name="Linke S."/>
            <person name="Dias J.M."/>
            <person name="Zheng X."/>
            <person name="Gradin K."/>
            <person name="Wallis T.P."/>
            <person name="Hamilton B.R."/>
            <person name="Gustafsson M."/>
            <person name="Ruas J.L."/>
            <person name="Wilkins S."/>
            <person name="Bilton R.L."/>
            <person name="Brismar K."/>
            <person name="Whitelaw M.L."/>
            <person name="Pereira T."/>
            <person name="Gorman J.J."/>
            <person name="Ericson J."/>
            <person name="Peet D.J."/>
            <person name="Lendahl U."/>
            <person name="Poellinger L."/>
        </authorList>
    </citation>
    <scope>HYDROXYLATION BY HIF1AN</scope>
</reference>
<keyword id="KW-0010">Activator</keyword>
<keyword id="KW-0040">ANK repeat</keyword>
<keyword id="KW-1003">Cell membrane</keyword>
<keyword id="KW-0217">Developmental protein</keyword>
<keyword id="KW-0221">Differentiation</keyword>
<keyword id="KW-1015">Disulfide bond</keyword>
<keyword id="KW-0245">EGF-like domain</keyword>
<keyword id="KW-0325">Glycoprotein</keyword>
<keyword id="KW-0472">Membrane</keyword>
<keyword id="KW-0488">Methylation</keyword>
<keyword id="KW-0914">Notch signaling pathway</keyword>
<keyword id="KW-0539">Nucleus</keyword>
<keyword id="KW-0597">Phosphoprotein</keyword>
<keyword id="KW-0675">Receptor</keyword>
<keyword id="KW-1185">Reference proteome</keyword>
<keyword id="KW-0677">Repeat</keyword>
<keyword id="KW-0732">Signal</keyword>
<keyword id="KW-0804">Transcription</keyword>
<keyword id="KW-0805">Transcription regulation</keyword>
<keyword id="KW-0812">Transmembrane</keyword>
<keyword id="KW-1133">Transmembrane helix</keyword>
<name>NOTC3_MOUSE</name>
<organism>
    <name type="scientific">Mus musculus</name>
    <name type="common">Mouse</name>
    <dbReference type="NCBI Taxonomy" id="10090"/>
    <lineage>
        <taxon>Eukaryota</taxon>
        <taxon>Metazoa</taxon>
        <taxon>Chordata</taxon>
        <taxon>Craniata</taxon>
        <taxon>Vertebrata</taxon>
        <taxon>Euteleostomi</taxon>
        <taxon>Mammalia</taxon>
        <taxon>Eutheria</taxon>
        <taxon>Euarchontoglires</taxon>
        <taxon>Glires</taxon>
        <taxon>Rodentia</taxon>
        <taxon>Myomorpha</taxon>
        <taxon>Muroidea</taxon>
        <taxon>Muridae</taxon>
        <taxon>Murinae</taxon>
        <taxon>Mus</taxon>
        <taxon>Mus</taxon>
    </lineage>
</organism>